<name>RS4_THEYD</name>
<accession>B5YG23</accession>
<proteinExistence type="inferred from homology"/>
<reference key="1">
    <citation type="submission" date="2008-08" db="EMBL/GenBank/DDBJ databases">
        <title>The complete genome sequence of Thermodesulfovibrio yellowstonii strain ATCC 51303 / DSM 11347 / YP87.</title>
        <authorList>
            <person name="Dodson R.J."/>
            <person name="Durkin A.S."/>
            <person name="Wu M."/>
            <person name="Eisen J."/>
            <person name="Sutton G."/>
        </authorList>
    </citation>
    <scope>NUCLEOTIDE SEQUENCE [LARGE SCALE GENOMIC DNA]</scope>
    <source>
        <strain>ATCC 51303 / DSM 11347 / YP87</strain>
    </source>
</reference>
<dbReference type="EMBL" id="CP001147">
    <property type="protein sequence ID" value="ACI21092.1"/>
    <property type="molecule type" value="Genomic_DNA"/>
</dbReference>
<dbReference type="RefSeq" id="WP_012545818.1">
    <property type="nucleotide sequence ID" value="NC_011296.1"/>
</dbReference>
<dbReference type="RefSeq" id="YP_002249221.1">
    <property type="nucleotide sequence ID" value="NC_011296.1"/>
</dbReference>
<dbReference type="SMR" id="B5YG23"/>
<dbReference type="FunCoup" id="B5YG23">
    <property type="interactions" value="560"/>
</dbReference>
<dbReference type="STRING" id="289376.THEYE_A1422"/>
<dbReference type="EnsemblBacteria" id="ACI21092">
    <property type="protein sequence ID" value="ACI21092"/>
    <property type="gene ID" value="THEYE_A1422"/>
</dbReference>
<dbReference type="KEGG" id="tye:THEYE_A1422"/>
<dbReference type="PATRIC" id="fig|289376.4.peg.1382"/>
<dbReference type="eggNOG" id="COG0522">
    <property type="taxonomic scope" value="Bacteria"/>
</dbReference>
<dbReference type="HOGENOM" id="CLU_092403_0_2_0"/>
<dbReference type="InParanoid" id="B5YG23"/>
<dbReference type="OrthoDB" id="9803672at2"/>
<dbReference type="Proteomes" id="UP000000718">
    <property type="component" value="Chromosome"/>
</dbReference>
<dbReference type="GO" id="GO:0015935">
    <property type="term" value="C:small ribosomal subunit"/>
    <property type="evidence" value="ECO:0000318"/>
    <property type="project" value="GO_Central"/>
</dbReference>
<dbReference type="GO" id="GO:0019843">
    <property type="term" value="F:rRNA binding"/>
    <property type="evidence" value="ECO:0000318"/>
    <property type="project" value="GO_Central"/>
</dbReference>
<dbReference type="GO" id="GO:0003735">
    <property type="term" value="F:structural constituent of ribosome"/>
    <property type="evidence" value="ECO:0000318"/>
    <property type="project" value="GO_Central"/>
</dbReference>
<dbReference type="GO" id="GO:0042274">
    <property type="term" value="P:ribosomal small subunit biogenesis"/>
    <property type="evidence" value="ECO:0000318"/>
    <property type="project" value="GO_Central"/>
</dbReference>
<dbReference type="GO" id="GO:0006412">
    <property type="term" value="P:translation"/>
    <property type="evidence" value="ECO:0007669"/>
    <property type="project" value="UniProtKB-UniRule"/>
</dbReference>
<dbReference type="CDD" id="cd00165">
    <property type="entry name" value="S4"/>
    <property type="match status" value="1"/>
</dbReference>
<dbReference type="FunFam" id="1.10.1050.10:FF:000001">
    <property type="entry name" value="30S ribosomal protein S4"/>
    <property type="match status" value="1"/>
</dbReference>
<dbReference type="FunFam" id="3.10.290.10:FF:000001">
    <property type="entry name" value="30S ribosomal protein S4"/>
    <property type="match status" value="1"/>
</dbReference>
<dbReference type="Gene3D" id="1.10.1050.10">
    <property type="entry name" value="Ribosomal Protein S4 Delta 41, Chain A, domain 1"/>
    <property type="match status" value="1"/>
</dbReference>
<dbReference type="Gene3D" id="3.10.290.10">
    <property type="entry name" value="RNA-binding S4 domain"/>
    <property type="match status" value="1"/>
</dbReference>
<dbReference type="HAMAP" id="MF_01306_B">
    <property type="entry name" value="Ribosomal_uS4_B"/>
    <property type="match status" value="1"/>
</dbReference>
<dbReference type="InterPro" id="IPR022801">
    <property type="entry name" value="Ribosomal_uS4"/>
</dbReference>
<dbReference type="InterPro" id="IPR005709">
    <property type="entry name" value="Ribosomal_uS4_bac-type"/>
</dbReference>
<dbReference type="InterPro" id="IPR001912">
    <property type="entry name" value="Ribosomal_uS4_N"/>
</dbReference>
<dbReference type="InterPro" id="IPR002942">
    <property type="entry name" value="S4_RNA-bd"/>
</dbReference>
<dbReference type="InterPro" id="IPR036986">
    <property type="entry name" value="S4_RNA-bd_sf"/>
</dbReference>
<dbReference type="NCBIfam" id="NF003717">
    <property type="entry name" value="PRK05327.1"/>
    <property type="match status" value="1"/>
</dbReference>
<dbReference type="NCBIfam" id="TIGR01017">
    <property type="entry name" value="rpsD_bact"/>
    <property type="match status" value="1"/>
</dbReference>
<dbReference type="PANTHER" id="PTHR11831">
    <property type="entry name" value="30S 40S RIBOSOMAL PROTEIN"/>
    <property type="match status" value="1"/>
</dbReference>
<dbReference type="PANTHER" id="PTHR11831:SF4">
    <property type="entry name" value="SMALL RIBOSOMAL SUBUNIT PROTEIN US4M"/>
    <property type="match status" value="1"/>
</dbReference>
<dbReference type="Pfam" id="PF00163">
    <property type="entry name" value="Ribosomal_S4"/>
    <property type="match status" value="1"/>
</dbReference>
<dbReference type="Pfam" id="PF01479">
    <property type="entry name" value="S4"/>
    <property type="match status" value="1"/>
</dbReference>
<dbReference type="SMART" id="SM01390">
    <property type="entry name" value="Ribosomal_S4"/>
    <property type="match status" value="1"/>
</dbReference>
<dbReference type="SMART" id="SM00363">
    <property type="entry name" value="S4"/>
    <property type="match status" value="1"/>
</dbReference>
<dbReference type="SUPFAM" id="SSF55174">
    <property type="entry name" value="Alpha-L RNA-binding motif"/>
    <property type="match status" value="1"/>
</dbReference>
<dbReference type="PROSITE" id="PS50889">
    <property type="entry name" value="S4"/>
    <property type="match status" value="1"/>
</dbReference>
<organism>
    <name type="scientific">Thermodesulfovibrio yellowstonii (strain ATCC 51303 / DSM 11347 / YP87)</name>
    <dbReference type="NCBI Taxonomy" id="289376"/>
    <lineage>
        <taxon>Bacteria</taxon>
        <taxon>Pseudomonadati</taxon>
        <taxon>Nitrospirota</taxon>
        <taxon>Thermodesulfovibrionia</taxon>
        <taxon>Thermodesulfovibrionales</taxon>
        <taxon>Thermodesulfovibrionaceae</taxon>
        <taxon>Thermodesulfovibrio</taxon>
    </lineage>
</organism>
<sequence>MARYTGSLCRLCRRESMKMFLKGTRCYTEKCAFERRKYPPGQHGHNRGKLSDYGLQLREKQKVKRIYGVMERQFKNYFEKATKMKGVTGENLLKLLERRLDNVIYRMGFAMNRRQARQLVRHGYFTVNGKKVDIPSYLVRPGDIIEIVQSGKELEIIKESLALAEQRGFPVWLEVNAEEMKGKFVRLPEREEMQLPVQEQLIVEFYSK</sequence>
<protein>
    <recommendedName>
        <fullName evidence="1">Small ribosomal subunit protein uS4</fullName>
    </recommendedName>
    <alternativeName>
        <fullName evidence="2">30S ribosomal protein S4</fullName>
    </alternativeName>
</protein>
<evidence type="ECO:0000255" key="1">
    <source>
        <dbReference type="HAMAP-Rule" id="MF_01306"/>
    </source>
</evidence>
<evidence type="ECO:0000305" key="2"/>
<keyword id="KW-1185">Reference proteome</keyword>
<keyword id="KW-0687">Ribonucleoprotein</keyword>
<keyword id="KW-0689">Ribosomal protein</keyword>
<keyword id="KW-0694">RNA-binding</keyword>
<keyword id="KW-0699">rRNA-binding</keyword>
<feature type="chain" id="PRO_1000140811" description="Small ribosomal subunit protein uS4">
    <location>
        <begin position="1"/>
        <end position="208"/>
    </location>
</feature>
<feature type="domain" description="S4 RNA-binding" evidence="1">
    <location>
        <begin position="98"/>
        <end position="161"/>
    </location>
</feature>
<comment type="function">
    <text evidence="1">One of the primary rRNA binding proteins, it binds directly to 16S rRNA where it nucleates assembly of the body of the 30S subunit.</text>
</comment>
<comment type="function">
    <text evidence="1">With S5 and S12 plays an important role in translational accuracy.</text>
</comment>
<comment type="subunit">
    <text evidence="1">Part of the 30S ribosomal subunit. Contacts protein S5. The interaction surface between S4 and S5 is involved in control of translational fidelity.</text>
</comment>
<comment type="similarity">
    <text evidence="1">Belongs to the universal ribosomal protein uS4 family.</text>
</comment>
<gene>
    <name evidence="1" type="primary">rpsD</name>
    <name type="ordered locus">THEYE_A1422</name>
</gene>